<comment type="function">
    <text evidence="2">A cytochrome P450 monooxygenase involved in the metabolism of various endogenous substrates, including fatty acids, steroid hormones and vitamins. Mechanistically, uses molecular oxygen inserting one oxygen atom into a substrate, and reducing the second into a water molecule, with two electrons provided by NADPH via cytochrome P450 reductase (NADPH--hemoprotein reductase). Catalyzes the hydroxylation of carbon-hydrogen bonds. Exhibits high catalytic activity for the formation of hydroxyestrogens from estrone (E1) and 17beta-estradiol (E2), namely 2-hydroxy E1 and E2. Metabolizes cholesterol toward 25-hydroxycholesterol, a physiological regulator of cellular cholesterol homeostasis. May act as a major enzyme for all-trans retinoic acid biosynthesis in the liver. Catalyzes two successive oxidative transformation of all-trans retinol to all-trans retinal and then to the active form all-trans retinoic acid. Primarily catalyzes stereoselective epoxidation of the last double bond of polyunsaturated fatty acids (PUFA), displaying a strong preference for the (R,S) stereoisomer. Catalyzes bisallylic hydroxylation and omega-1 hydroxylation of PUFA. May also participate in eicosanoids metabolism by converting hydroperoxide species into oxo metabolites (lipoxygenase-like reaction, NADPH-independent). Plays a role in the oxidative metabolism of xenobiotics. Catalyzes the N-hydroxylation of heterocyclic amines and the O-deethylation of phenacetin. Metabolizes caffeine via N3-demethylation.</text>
</comment>
<comment type="catalytic activity">
    <reaction evidence="2">
        <text>an organic molecule + reduced [NADPH--hemoprotein reductase] + O2 = an alcohol + oxidized [NADPH--hemoprotein reductase] + H2O + H(+)</text>
        <dbReference type="Rhea" id="RHEA:17149"/>
        <dbReference type="Rhea" id="RHEA-COMP:11964"/>
        <dbReference type="Rhea" id="RHEA-COMP:11965"/>
        <dbReference type="ChEBI" id="CHEBI:15377"/>
        <dbReference type="ChEBI" id="CHEBI:15378"/>
        <dbReference type="ChEBI" id="CHEBI:15379"/>
        <dbReference type="ChEBI" id="CHEBI:30879"/>
        <dbReference type="ChEBI" id="CHEBI:57618"/>
        <dbReference type="ChEBI" id="CHEBI:58210"/>
        <dbReference type="ChEBI" id="CHEBI:142491"/>
        <dbReference type="EC" id="1.14.14.1"/>
    </reaction>
    <physiologicalReaction direction="left-to-right" evidence="2">
        <dbReference type="Rhea" id="RHEA:17150"/>
    </physiologicalReaction>
</comment>
<comment type="catalytic activity">
    <reaction evidence="2">
        <text>17beta-estradiol + reduced [NADPH--hemoprotein reductase] + O2 = 2-hydroxy-17beta-estradiol + oxidized [NADPH--hemoprotein reductase] + H2O + H(+)</text>
        <dbReference type="Rhea" id="RHEA:47212"/>
        <dbReference type="Rhea" id="RHEA-COMP:11964"/>
        <dbReference type="Rhea" id="RHEA-COMP:11965"/>
        <dbReference type="ChEBI" id="CHEBI:15377"/>
        <dbReference type="ChEBI" id="CHEBI:15378"/>
        <dbReference type="ChEBI" id="CHEBI:15379"/>
        <dbReference type="ChEBI" id="CHEBI:16469"/>
        <dbReference type="ChEBI" id="CHEBI:28744"/>
        <dbReference type="ChEBI" id="CHEBI:57618"/>
        <dbReference type="ChEBI" id="CHEBI:58210"/>
    </reaction>
    <physiologicalReaction direction="left-to-right" evidence="2">
        <dbReference type="Rhea" id="RHEA:47213"/>
    </physiologicalReaction>
</comment>
<comment type="catalytic activity">
    <reaction evidence="2">
        <text>17beta-estradiol + reduced [NADPH--hemoprotein reductase] + O2 = 4-hydroxy-17beta-estradiol + oxidized [NADPH--hemoprotein reductase] + H2O + H(+)</text>
        <dbReference type="Rhea" id="RHEA:47280"/>
        <dbReference type="Rhea" id="RHEA-COMP:11964"/>
        <dbReference type="Rhea" id="RHEA-COMP:11965"/>
        <dbReference type="ChEBI" id="CHEBI:15377"/>
        <dbReference type="ChEBI" id="CHEBI:15378"/>
        <dbReference type="ChEBI" id="CHEBI:15379"/>
        <dbReference type="ChEBI" id="CHEBI:16469"/>
        <dbReference type="ChEBI" id="CHEBI:57618"/>
        <dbReference type="ChEBI" id="CHEBI:58210"/>
        <dbReference type="ChEBI" id="CHEBI:62845"/>
    </reaction>
    <physiologicalReaction direction="left-to-right" evidence="2">
        <dbReference type="Rhea" id="RHEA:47281"/>
    </physiologicalReaction>
</comment>
<comment type="catalytic activity">
    <reaction evidence="2">
        <text>estrone + reduced [NADPH--hemoprotein reductase] + O2 = 2-hydroxyestrone + oxidized [NADPH--hemoprotein reductase] + H2O + H(+)</text>
        <dbReference type="Rhea" id="RHEA:47208"/>
        <dbReference type="Rhea" id="RHEA-COMP:11964"/>
        <dbReference type="Rhea" id="RHEA-COMP:11965"/>
        <dbReference type="ChEBI" id="CHEBI:1156"/>
        <dbReference type="ChEBI" id="CHEBI:15377"/>
        <dbReference type="ChEBI" id="CHEBI:15378"/>
        <dbReference type="ChEBI" id="CHEBI:15379"/>
        <dbReference type="ChEBI" id="CHEBI:17263"/>
        <dbReference type="ChEBI" id="CHEBI:57618"/>
        <dbReference type="ChEBI" id="CHEBI:58210"/>
    </reaction>
    <physiologicalReaction direction="left-to-right" evidence="2">
        <dbReference type="Rhea" id="RHEA:47209"/>
    </physiologicalReaction>
</comment>
<comment type="catalytic activity">
    <reaction evidence="2">
        <text>estrone + reduced [NADPH--hemoprotein reductase] + O2 = 4-hydroxyestrone + oxidized [NADPH--hemoprotein reductase] + H2O + H(+)</text>
        <dbReference type="Rhea" id="RHEA:47292"/>
        <dbReference type="Rhea" id="RHEA-COMP:11964"/>
        <dbReference type="Rhea" id="RHEA-COMP:11965"/>
        <dbReference type="ChEBI" id="CHEBI:15377"/>
        <dbReference type="ChEBI" id="CHEBI:15378"/>
        <dbReference type="ChEBI" id="CHEBI:15379"/>
        <dbReference type="ChEBI" id="CHEBI:17263"/>
        <dbReference type="ChEBI" id="CHEBI:57618"/>
        <dbReference type="ChEBI" id="CHEBI:58210"/>
        <dbReference type="ChEBI" id="CHEBI:87602"/>
    </reaction>
    <physiologicalReaction direction="left-to-right" evidence="2">
        <dbReference type="Rhea" id="RHEA:47293"/>
    </physiologicalReaction>
</comment>
<comment type="catalytic activity">
    <reaction evidence="2">
        <text>cholesterol + reduced [NADPH--hemoprotein reductase] + O2 = 25-hydroxycholesterol + oxidized [NADPH--hemoprotein reductase] + H2O + H(+)</text>
        <dbReference type="Rhea" id="RHEA:50256"/>
        <dbReference type="Rhea" id="RHEA-COMP:11964"/>
        <dbReference type="Rhea" id="RHEA-COMP:11965"/>
        <dbReference type="ChEBI" id="CHEBI:15377"/>
        <dbReference type="ChEBI" id="CHEBI:15378"/>
        <dbReference type="ChEBI" id="CHEBI:15379"/>
        <dbReference type="ChEBI" id="CHEBI:16113"/>
        <dbReference type="ChEBI" id="CHEBI:42977"/>
        <dbReference type="ChEBI" id="CHEBI:57618"/>
        <dbReference type="ChEBI" id="CHEBI:58210"/>
    </reaction>
    <physiologicalReaction direction="left-to-right" evidence="2">
        <dbReference type="Rhea" id="RHEA:50257"/>
    </physiologicalReaction>
</comment>
<comment type="catalytic activity">
    <reaction evidence="2">
        <text>all-trans-retinol + reduced [NADPH--hemoprotein reductase] + O2 = all-trans-retinal + oxidized [NADPH--hemoprotein reductase] + 2 H2O + H(+)</text>
        <dbReference type="Rhea" id="RHEA:42092"/>
        <dbReference type="Rhea" id="RHEA-COMP:11964"/>
        <dbReference type="Rhea" id="RHEA-COMP:11965"/>
        <dbReference type="ChEBI" id="CHEBI:15377"/>
        <dbReference type="ChEBI" id="CHEBI:15378"/>
        <dbReference type="ChEBI" id="CHEBI:15379"/>
        <dbReference type="ChEBI" id="CHEBI:17336"/>
        <dbReference type="ChEBI" id="CHEBI:17898"/>
        <dbReference type="ChEBI" id="CHEBI:57618"/>
        <dbReference type="ChEBI" id="CHEBI:58210"/>
    </reaction>
    <physiologicalReaction direction="left-to-right" evidence="2">
        <dbReference type="Rhea" id="RHEA:42093"/>
    </physiologicalReaction>
</comment>
<comment type="catalytic activity">
    <reaction evidence="2">
        <text>all-trans-retinal + reduced [NADPH--hemoprotein reductase] + O2 = all-trans-retinoate + oxidized [NADPH--hemoprotein reductase] + H2O + 2 H(+)</text>
        <dbReference type="Rhea" id="RHEA:42088"/>
        <dbReference type="Rhea" id="RHEA-COMP:11964"/>
        <dbReference type="Rhea" id="RHEA-COMP:11965"/>
        <dbReference type="ChEBI" id="CHEBI:15377"/>
        <dbReference type="ChEBI" id="CHEBI:15378"/>
        <dbReference type="ChEBI" id="CHEBI:15379"/>
        <dbReference type="ChEBI" id="CHEBI:17898"/>
        <dbReference type="ChEBI" id="CHEBI:35291"/>
        <dbReference type="ChEBI" id="CHEBI:57618"/>
        <dbReference type="ChEBI" id="CHEBI:58210"/>
    </reaction>
    <physiologicalReaction direction="left-to-right" evidence="2">
        <dbReference type="Rhea" id="RHEA:42089"/>
    </physiologicalReaction>
</comment>
<comment type="catalytic activity">
    <reaction evidence="2">
        <text>(5Z,8Z,11Z,14Z)-eicosatetraenoate + reduced [NADPH--hemoprotein reductase] + O2 = (14R,15S)-epoxy-(5Z,8Z,11Z)-eicosatrienoate + oxidized [NADPH--hemoprotein reductase] + H2O + H(+)</text>
        <dbReference type="Rhea" id="RHEA:49860"/>
        <dbReference type="Rhea" id="RHEA-COMP:11964"/>
        <dbReference type="Rhea" id="RHEA-COMP:11965"/>
        <dbReference type="ChEBI" id="CHEBI:15377"/>
        <dbReference type="ChEBI" id="CHEBI:15378"/>
        <dbReference type="ChEBI" id="CHEBI:15379"/>
        <dbReference type="ChEBI" id="CHEBI:32395"/>
        <dbReference type="ChEBI" id="CHEBI:57618"/>
        <dbReference type="ChEBI" id="CHEBI:58210"/>
        <dbReference type="ChEBI" id="CHEBI:131965"/>
    </reaction>
    <physiologicalReaction direction="left-to-right" evidence="2">
        <dbReference type="Rhea" id="RHEA:49861"/>
    </physiologicalReaction>
</comment>
<comment type="catalytic activity">
    <reaction evidence="2">
        <text>(5Z,8Z,11Z,14Z)-eicosatetraenoate + reduced [NADPH--hemoprotein reductase] + O2 = (14S,15R)-epoxy-(5Z,8Z,11Z)-eicosatrienoate + oxidized [NADPH--hemoprotein reductase] + H2O + H(+)</text>
        <dbReference type="Rhea" id="RHEA:49856"/>
        <dbReference type="Rhea" id="RHEA-COMP:11964"/>
        <dbReference type="Rhea" id="RHEA-COMP:11965"/>
        <dbReference type="ChEBI" id="CHEBI:15377"/>
        <dbReference type="ChEBI" id="CHEBI:15378"/>
        <dbReference type="ChEBI" id="CHEBI:15379"/>
        <dbReference type="ChEBI" id="CHEBI:32395"/>
        <dbReference type="ChEBI" id="CHEBI:57618"/>
        <dbReference type="ChEBI" id="CHEBI:58210"/>
        <dbReference type="ChEBI" id="CHEBI:131964"/>
    </reaction>
    <physiologicalReaction direction="left-to-right" evidence="2">
        <dbReference type="Rhea" id="RHEA:49857"/>
    </physiologicalReaction>
</comment>
<comment type="catalytic activity">
    <reaction evidence="2">
        <text>(5Z,8Z,11Z,14Z,17Z)-eicosapentaenoate + reduced [NADPH--hemoprotein reductase] + O2 = (17R,18S)-epoxy-(5Z,8Z,11Z,14Z)-eicosatetraenoate + oxidized [NADPH--hemoprotein reductase] + H2O + H(+)</text>
        <dbReference type="Rhea" id="RHEA:39779"/>
        <dbReference type="Rhea" id="RHEA-COMP:11964"/>
        <dbReference type="Rhea" id="RHEA-COMP:11965"/>
        <dbReference type="ChEBI" id="CHEBI:15377"/>
        <dbReference type="ChEBI" id="CHEBI:15378"/>
        <dbReference type="ChEBI" id="CHEBI:15379"/>
        <dbReference type="ChEBI" id="CHEBI:57618"/>
        <dbReference type="ChEBI" id="CHEBI:58210"/>
        <dbReference type="ChEBI" id="CHEBI:58562"/>
        <dbReference type="ChEBI" id="CHEBI:76634"/>
    </reaction>
    <physiologicalReaction direction="left-to-right" evidence="2">
        <dbReference type="Rhea" id="RHEA:39780"/>
    </physiologicalReaction>
</comment>
<comment type="catalytic activity">
    <reaction evidence="2">
        <text>(4Z,7Z,10Z,13Z,16Z,19Z)-docosahexaenoate + reduced [NADPH--hemoprotein reductase] + O2 = (19R,20S)-epoxy-(4Z,7Z,10Z,13Z,16Z)-docosapentaenoate + oxidized [NADPH--hemoprotein reductase] + H2O + H(+)</text>
        <dbReference type="Rhea" id="RHEA:52120"/>
        <dbReference type="Rhea" id="RHEA-COMP:11964"/>
        <dbReference type="Rhea" id="RHEA-COMP:11965"/>
        <dbReference type="ChEBI" id="CHEBI:15377"/>
        <dbReference type="ChEBI" id="CHEBI:15378"/>
        <dbReference type="ChEBI" id="CHEBI:15379"/>
        <dbReference type="ChEBI" id="CHEBI:57618"/>
        <dbReference type="ChEBI" id="CHEBI:58210"/>
        <dbReference type="ChEBI" id="CHEBI:77016"/>
        <dbReference type="ChEBI" id="CHEBI:136410"/>
    </reaction>
    <physiologicalReaction direction="left-to-right" evidence="2">
        <dbReference type="Rhea" id="RHEA:52121"/>
    </physiologicalReaction>
</comment>
<comment type="catalytic activity">
    <reaction evidence="2">
        <text>(5S)-hydroperoxy-(6E,8Z,11Z,14Z)-eicosatetraenoate = 5-oxo-(6E,8Z,11Z,14Z)-eicosatetraenoate + H2O</text>
        <dbReference type="Rhea" id="RHEA:48632"/>
        <dbReference type="ChEBI" id="CHEBI:15377"/>
        <dbReference type="ChEBI" id="CHEBI:57450"/>
        <dbReference type="ChEBI" id="CHEBI:65342"/>
    </reaction>
    <physiologicalReaction direction="left-to-right" evidence="2">
        <dbReference type="Rhea" id="RHEA:48633"/>
    </physiologicalReaction>
</comment>
<comment type="catalytic activity">
    <reaction evidence="2">
        <text>(12S)-hydroperoxy-(5Z,8Z,10E,14Z)-eicosatetraenoate = 12-oxo-(5Z,8Z,10E,14Z)-eicosatetraenoate + H2O</text>
        <dbReference type="Rhea" id="RHEA:37947"/>
        <dbReference type="ChEBI" id="CHEBI:15377"/>
        <dbReference type="ChEBI" id="CHEBI:57444"/>
        <dbReference type="ChEBI" id="CHEBI:75231"/>
        <dbReference type="EC" id="4.2.1.152"/>
    </reaction>
    <physiologicalReaction direction="left-to-right" evidence="2">
        <dbReference type="Rhea" id="RHEA:37948"/>
    </physiologicalReaction>
</comment>
<comment type="catalytic activity">
    <reaction evidence="2">
        <text>(15S)-hydroperoxy-(5Z,8Z,11Z,13E)-eicosatetraenoate = 15-oxo-(5Z,8Z,11Z,13E)-eicosatetraenoate + H2O</text>
        <dbReference type="Rhea" id="RHEA:48636"/>
        <dbReference type="ChEBI" id="CHEBI:15377"/>
        <dbReference type="ChEBI" id="CHEBI:57410"/>
        <dbReference type="ChEBI" id="CHEBI:57446"/>
    </reaction>
    <physiologicalReaction direction="left-to-right" evidence="2">
        <dbReference type="Rhea" id="RHEA:48637"/>
    </physiologicalReaction>
</comment>
<comment type="catalytic activity">
    <reaction evidence="2">
        <text>(13S)-hydroperoxy-(9Z,11E)-octadecadienoate = 13-oxo-(9Z,11E)-octadecadienoate + H2O</text>
        <dbReference type="Rhea" id="RHEA:48716"/>
        <dbReference type="ChEBI" id="CHEBI:15377"/>
        <dbReference type="ChEBI" id="CHEBI:57466"/>
        <dbReference type="ChEBI" id="CHEBI:90781"/>
    </reaction>
    <physiologicalReaction direction="left-to-right" evidence="2">
        <dbReference type="Rhea" id="RHEA:48717"/>
    </physiologicalReaction>
</comment>
<comment type="catalytic activity">
    <reaction evidence="2">
        <text>(5Z,8Z,11Z,14Z)-eicosatetraenoate + reduced [NADPH--hemoprotein reductase] + O2 = 13-hydroxy-(5Z,8Z,11Z,14Z)-eicosatetraenoate + oxidized [NADPH--hemoprotein reductase] + H2O + H(+)</text>
        <dbReference type="Rhea" id="RHEA:52292"/>
        <dbReference type="Rhea" id="RHEA-COMP:11964"/>
        <dbReference type="Rhea" id="RHEA-COMP:11965"/>
        <dbReference type="ChEBI" id="CHEBI:15377"/>
        <dbReference type="ChEBI" id="CHEBI:15378"/>
        <dbReference type="ChEBI" id="CHEBI:15379"/>
        <dbReference type="ChEBI" id="CHEBI:32395"/>
        <dbReference type="ChEBI" id="CHEBI:57618"/>
        <dbReference type="ChEBI" id="CHEBI:58210"/>
        <dbReference type="ChEBI" id="CHEBI:136524"/>
    </reaction>
    <physiologicalReaction direction="left-to-right" evidence="2">
        <dbReference type="Rhea" id="RHEA:52293"/>
    </physiologicalReaction>
</comment>
<comment type="catalytic activity">
    <reaction evidence="2">
        <text>(5Z,8Z,11Z,14Z)-eicosatetraenoate + reduced [NADPH--hemoprotein reductase] + O2 = 19-hydroxy-(5Z,8Z,11Z,14Z)-eicosatetraenoate + oxidized [NADPH--hemoprotein reductase] + H2O + H(+)</text>
        <dbReference type="Rhea" id="RHEA:39759"/>
        <dbReference type="Rhea" id="RHEA-COMP:11964"/>
        <dbReference type="Rhea" id="RHEA-COMP:11965"/>
        <dbReference type="ChEBI" id="CHEBI:15377"/>
        <dbReference type="ChEBI" id="CHEBI:15378"/>
        <dbReference type="ChEBI" id="CHEBI:15379"/>
        <dbReference type="ChEBI" id="CHEBI:32395"/>
        <dbReference type="ChEBI" id="CHEBI:57618"/>
        <dbReference type="ChEBI" id="CHEBI:58210"/>
        <dbReference type="ChEBI" id="CHEBI:76627"/>
    </reaction>
    <physiologicalReaction direction="left-to-right" evidence="2">
        <dbReference type="Rhea" id="RHEA:39760"/>
    </physiologicalReaction>
</comment>
<comment type="catalytic activity">
    <reaction evidence="2">
        <text>(9Z,12Z)-octadecadienoate + reduced [NADPH--hemoprotein reductase] + O2 = 11-hydroxy-(9Z,12Z)-octadecadienoate + oxidized [NADPH--hemoprotein reductase] + H2O + H(+)</text>
        <dbReference type="Rhea" id="RHEA:52284"/>
        <dbReference type="Rhea" id="RHEA-COMP:11964"/>
        <dbReference type="Rhea" id="RHEA-COMP:11965"/>
        <dbReference type="ChEBI" id="CHEBI:15377"/>
        <dbReference type="ChEBI" id="CHEBI:15378"/>
        <dbReference type="ChEBI" id="CHEBI:15379"/>
        <dbReference type="ChEBI" id="CHEBI:30245"/>
        <dbReference type="ChEBI" id="CHEBI:57618"/>
        <dbReference type="ChEBI" id="CHEBI:58210"/>
        <dbReference type="ChEBI" id="CHEBI:136522"/>
    </reaction>
    <physiologicalReaction direction="left-to-right" evidence="2">
        <dbReference type="Rhea" id="RHEA:52285"/>
    </physiologicalReaction>
</comment>
<comment type="cofactor">
    <cofactor evidence="1">
        <name>heme</name>
        <dbReference type="ChEBI" id="CHEBI:30413"/>
    </cofactor>
</comment>
<comment type="pathway">
    <text evidence="2">Cofactor metabolism; retinol metabolism.</text>
</comment>
<comment type="pathway">
    <text evidence="2">Steroid metabolism; cholesterol metabolism.</text>
</comment>
<comment type="pathway">
    <text evidence="2">Lipid metabolism; arachidonate metabolism.</text>
</comment>
<comment type="subunit">
    <text evidence="2">Interacts with PGRMC1; the interaction requires PGRMC1 homodimerization.</text>
</comment>
<comment type="subcellular location">
    <subcellularLocation>
        <location evidence="2">Endoplasmic reticulum membrane</location>
        <topology evidence="2">Peripheral membrane protein</topology>
    </subcellularLocation>
    <subcellularLocation>
        <location evidence="2">Microsome membrane</location>
        <topology evidence="2">Peripheral membrane protein</topology>
    </subcellularLocation>
</comment>
<comment type="induction">
    <text>By 3-methylcholanthrene (3MC).</text>
</comment>
<comment type="similarity">
    <text evidence="5">Belongs to the cytochrome P450 family.</text>
</comment>
<evidence type="ECO:0000250" key="1"/>
<evidence type="ECO:0000250" key="2">
    <source>
        <dbReference type="UniProtKB" id="P05177"/>
    </source>
</evidence>
<evidence type="ECO:0000250" key="3">
    <source>
        <dbReference type="UniProtKB" id="P56592"/>
    </source>
</evidence>
<evidence type="ECO:0000269" key="4">
    <source>
    </source>
</evidence>
<evidence type="ECO:0000305" key="5"/>
<proteinExistence type="evidence at protein level"/>
<reference key="1">
    <citation type="journal article" date="1984" name="Proc. Natl. Acad. Sci. U.S.A.">
        <title>Coding nucleotide sequence of 3-methylcholanthrene-inducible cytochrome P-450d cDNA from rat liver.</title>
        <authorList>
            <person name="Kawajiri K."/>
            <person name="Gotoh O."/>
            <person name="Sogawa K."/>
            <person name="Tagashira Y."/>
            <person name="Muramatsu M."/>
            <person name="Fujii-Kuriyama Y."/>
        </authorList>
    </citation>
    <scope>NUCLEOTIDE SEQUENCE [MRNA]</scope>
</reference>
<reference key="2">
    <citation type="journal article" date="1985" name="J. Biol. Chem.">
        <title>Complete nucleotide sequence of a methylcholanthrene-inducible cytochrome P-450 (P-450d) gene in the rat.</title>
        <authorList>
            <person name="Sogawa K."/>
            <person name="Gotoh O."/>
            <person name="Kawajiri K."/>
            <person name="Harada T."/>
            <person name="Fujii-Kuriyama Y."/>
        </authorList>
    </citation>
    <scope>NUCLEOTIDE SEQUENCE [GENOMIC DNA]</scope>
</reference>
<reference key="3">
    <citation type="journal article" date="1991" name="Mol. Carcinog.">
        <title>Stable expression of rat cytochrome P450IA2 cDNA and hydroxylation of 17 beta-estradiol and 2-aminofluorene in V79 Chinese hamster cells.</title>
        <authorList>
            <person name="Wolfel C."/>
            <person name="Platt K.L."/>
            <person name="Dogra S."/>
            <person name="Glatt H."/>
            <person name="Wachter F."/>
            <person name="Doehmer J."/>
        </authorList>
    </citation>
    <scope>NUCLEOTIDE SEQUENCE [MRNA]</scope>
</reference>
<reference key="4">
    <citation type="journal article" date="2004" name="Genome Res.">
        <title>The status, quality, and expansion of the NIH full-length cDNA project: the Mammalian Gene Collection (MGC).</title>
        <authorList>
            <consortium name="The MGC Project Team"/>
        </authorList>
    </citation>
    <scope>NUCLEOTIDE SEQUENCE [LARGE SCALE MRNA]</scope>
    <source>
        <tissue>Liver</tissue>
    </source>
</reference>
<reference key="5">
    <citation type="journal article" date="1986" name="Arch. Biochem. Biophys.">
        <title>The primary structure of cytochrome P-450d purified from rat liver microsomes: prediction of helical regions and domain analysis.</title>
        <authorList>
            <person name="Haniu M."/>
            <person name="Ryan D.E."/>
            <person name="Levin W."/>
            <person name="Shively J.E."/>
        </authorList>
    </citation>
    <scope>PARTIAL PROTEIN SEQUENCE</scope>
    <source>
        <tissue>Liver</tissue>
    </source>
</reference>
<reference key="6">
    <citation type="journal article" date="1986" name="Biochemistry">
        <title>Amino-terminal sequence and structure of monoclonal antibody immunopurified cytochromes P-450.</title>
        <authorList>
            <person name="Cheng K.C."/>
            <person name="Park S.S."/>
            <person name="Krutzsch H.C."/>
            <person name="Grantham P.H."/>
            <person name="Gelboin H.V."/>
            <person name="Friedman F.K."/>
        </authorList>
    </citation>
    <scope>PROTEIN SEQUENCE OF 2-26</scope>
</reference>
<reference key="7">
    <citation type="journal article" date="1982" name="Biochemistry">
        <title>Amino-terminal and carboxy-terminal sequence of hepatic microsomal cytochrome P-450d, a unique hemoprotein from rats treated with isosafrole.</title>
        <authorList>
            <person name="Botelho L.H."/>
            <person name="Ryan D.E."/>
            <person name="Yuan P.M."/>
            <person name="Kutny R."/>
            <person name="Shively J.E."/>
            <person name="Levin W."/>
        </authorList>
    </citation>
    <scope>PROTEIN SEQUENCE OF 2-20</scope>
</reference>
<reference key="8">
    <citation type="journal article" date="1992" name="Biochemistry">
        <title>Modification of cytochrome P450 1A2 enzymes by the mechanism-based inactivator 2-ethynylnaphthalene and the photoaffinity label 4-azidobiphenyl.</title>
        <authorList>
            <person name="Yun C.H."/>
            <person name="Hammons G.J."/>
            <person name="Jones G."/>
            <person name="Martin M.V."/>
            <person name="Hopkins N.E."/>
            <person name="Alworth W.L."/>
            <person name="Guengerich F.P."/>
        </authorList>
    </citation>
    <scope>PROTEIN SEQUENCE OF 67-78</scope>
</reference>
<reference key="9">
    <citation type="journal article" date="1984" name="J. Biochem.">
        <title>Characterization of complementary DNA clones coding for two forms of 3-methylcholanthrene-inducible rat liver cytochrome P-450.</title>
        <authorList>
            <person name="Yabusaki Y."/>
            <person name="Murakami H."/>
            <person name="Nakamura K."/>
            <person name="Nomura N."/>
            <person name="Shimizu M."/>
            <person name="Oeda K."/>
            <person name="Ohkawa H."/>
        </authorList>
    </citation>
    <scope>NUCLEOTIDE SEQUENCE [MRNA] OF 147-513</scope>
</reference>
<reference key="10">
    <citation type="journal article" date="2013" name="PLoS ONE">
        <title>Discovery and confirmation of O-GlcNAcylated proteins in rat liver mitochondria by combination of mass spectrometry and immunological methods.</title>
        <authorList>
            <person name="Cao W."/>
            <person name="Cao J."/>
            <person name="Huang J."/>
            <person name="Yao J."/>
            <person name="Yan G."/>
            <person name="Xu H."/>
            <person name="Yang P."/>
        </authorList>
    </citation>
    <scope>GLYCOSYLATION AT SER-68</scope>
</reference>
<protein>
    <recommendedName>
        <fullName>Cytochrome P450 1A2</fullName>
        <ecNumber evidence="2">1.14.14.1</ecNumber>
    </recommendedName>
    <alternativeName>
        <fullName>CYPIA2</fullName>
    </alternativeName>
    <alternativeName>
        <fullName evidence="2">Cholesterol 25-hydroxylase</fullName>
    </alternativeName>
    <alternativeName>
        <fullName>Cytochrome P-448</fullName>
    </alternativeName>
    <alternativeName>
        <fullName>Cytochrome P-450d</fullName>
    </alternativeName>
    <alternativeName>
        <fullName>Cytochrome P450-D</fullName>
    </alternativeName>
    <alternativeName>
        <fullName>Hydroperoxy icosatetraenoate dehydratase</fullName>
        <ecNumber evidence="2">4.2.1.152</ecNumber>
    </alternativeName>
</protein>
<keyword id="KW-0903">Direct protein sequencing</keyword>
<keyword id="KW-0256">Endoplasmic reticulum</keyword>
<keyword id="KW-0276">Fatty acid metabolism</keyword>
<keyword id="KW-0325">Glycoprotein</keyword>
<keyword id="KW-0349">Heme</keyword>
<keyword id="KW-0408">Iron</keyword>
<keyword id="KW-0443">Lipid metabolism</keyword>
<keyword id="KW-0456">Lyase</keyword>
<keyword id="KW-0472">Membrane</keyword>
<keyword id="KW-0479">Metal-binding</keyword>
<keyword id="KW-0492">Microsome</keyword>
<keyword id="KW-0503">Monooxygenase</keyword>
<keyword id="KW-0560">Oxidoreductase</keyword>
<keyword id="KW-1185">Reference proteome</keyword>
<keyword id="KW-0753">Steroid metabolism</keyword>
<keyword id="KW-1207">Sterol metabolism</keyword>
<dbReference type="EC" id="1.14.14.1" evidence="2"/>
<dbReference type="EC" id="4.2.1.152" evidence="2"/>
<dbReference type="EMBL" id="K02422">
    <property type="protein sequence ID" value="AAA41028.1"/>
    <property type="molecule type" value="mRNA"/>
</dbReference>
<dbReference type="EMBL" id="K03241">
    <property type="protein sequence ID" value="AAA41053.1"/>
    <property type="molecule type" value="Genomic_DNA"/>
</dbReference>
<dbReference type="EMBL" id="BC127476">
    <property type="protein sequence ID" value="AAI27477.1"/>
    <property type="molecule type" value="mRNA"/>
</dbReference>
<dbReference type="EMBL" id="X01031">
    <property type="protein sequence ID" value="CAA25516.1"/>
    <property type="molecule type" value="mRNA"/>
</dbReference>
<dbReference type="PIR" id="A61400">
    <property type="entry name" value="A61400"/>
</dbReference>
<dbReference type="RefSeq" id="NP_036673.3">
    <property type="nucleotide sequence ID" value="NM_012541.3"/>
</dbReference>
<dbReference type="SMR" id="P04799"/>
<dbReference type="BioGRID" id="246478">
    <property type="interactions" value="1"/>
</dbReference>
<dbReference type="FunCoup" id="P04799">
    <property type="interactions" value="124"/>
</dbReference>
<dbReference type="IntAct" id="P04799">
    <property type="interactions" value="1"/>
</dbReference>
<dbReference type="STRING" id="10116.ENSRNOP00000021653"/>
<dbReference type="BindingDB" id="P04799"/>
<dbReference type="ChEMBL" id="CHEMBL1075125"/>
<dbReference type="GlyCosmos" id="P04799">
    <property type="glycosylation" value="1 site, No reported glycans"/>
</dbReference>
<dbReference type="GlyGen" id="P04799">
    <property type="glycosylation" value="1 site, 1 O-linked glycan (1 site)"/>
</dbReference>
<dbReference type="iPTMnet" id="P04799"/>
<dbReference type="PhosphoSitePlus" id="P04799"/>
<dbReference type="PaxDb" id="10116-ENSRNOP00000021653"/>
<dbReference type="Ensembl" id="ENSRNOT00000021653.8">
    <property type="protein sequence ID" value="ENSRNOP00000021653.5"/>
    <property type="gene ID" value="ENSRNOG00000016173.9"/>
</dbReference>
<dbReference type="GeneID" id="24297"/>
<dbReference type="KEGG" id="rno:24297"/>
<dbReference type="UCSC" id="RGD:2459">
    <property type="organism name" value="rat"/>
</dbReference>
<dbReference type="AGR" id="RGD:2459"/>
<dbReference type="CTD" id="1544"/>
<dbReference type="RGD" id="2459">
    <property type="gene designation" value="Cyp1a2"/>
</dbReference>
<dbReference type="eggNOG" id="KOG0156">
    <property type="taxonomic scope" value="Eukaryota"/>
</dbReference>
<dbReference type="GeneTree" id="ENSGT00950000183037"/>
<dbReference type="HOGENOM" id="CLU_001570_22_0_1"/>
<dbReference type="InParanoid" id="P04799"/>
<dbReference type="OrthoDB" id="28075at9989"/>
<dbReference type="PhylomeDB" id="P04799"/>
<dbReference type="BRENDA" id="1.14.14.1">
    <property type="organism ID" value="5301"/>
</dbReference>
<dbReference type="Reactome" id="R-RNO-156581">
    <property type="pathway name" value="Methylation"/>
</dbReference>
<dbReference type="Reactome" id="R-RNO-211957">
    <property type="pathway name" value="Aromatic amines can be N-hydroxylated or N-dealkylated by CYP1A2"/>
</dbReference>
<dbReference type="Reactome" id="R-RNO-2142670">
    <property type="pathway name" value="Synthesis of epoxy (EET) and dihydroxyeicosatrienoic acids (DHET)"/>
</dbReference>
<dbReference type="Reactome" id="R-RNO-2142816">
    <property type="pathway name" value="Synthesis of (16-20)-hydroxyeicosatetraenoic acids (HETE)"/>
</dbReference>
<dbReference type="Reactome" id="R-RNO-5423646">
    <property type="pathway name" value="Aflatoxin activation and detoxification"/>
</dbReference>
<dbReference type="Reactome" id="R-RNO-9018681">
    <property type="pathway name" value="Biosynthesis of protectins"/>
</dbReference>
<dbReference type="Reactome" id="R-RNO-9027307">
    <property type="pathway name" value="Biosynthesis of maresin-like SPMs"/>
</dbReference>
<dbReference type="SABIO-RK" id="P04799"/>
<dbReference type="UniPathway" id="UPA00296"/>
<dbReference type="UniPathway" id="UPA00383"/>
<dbReference type="UniPathway" id="UPA00912"/>
<dbReference type="PRO" id="PR:P04799"/>
<dbReference type="Proteomes" id="UP000002494">
    <property type="component" value="Chromosome 8"/>
</dbReference>
<dbReference type="Bgee" id="ENSRNOG00000016173">
    <property type="expression patterns" value="Expressed in liver and 11 other cell types or tissues"/>
</dbReference>
<dbReference type="GO" id="GO:0005789">
    <property type="term" value="C:endoplasmic reticulum membrane"/>
    <property type="evidence" value="ECO:0007669"/>
    <property type="project" value="UniProtKB-SubCell"/>
</dbReference>
<dbReference type="GO" id="GO:0043231">
    <property type="term" value="C:intracellular membrane-bounded organelle"/>
    <property type="evidence" value="ECO:0000266"/>
    <property type="project" value="RGD"/>
</dbReference>
<dbReference type="GO" id="GO:0034875">
    <property type="term" value="F:caffeine oxidase activity"/>
    <property type="evidence" value="ECO:0000266"/>
    <property type="project" value="RGD"/>
</dbReference>
<dbReference type="GO" id="GO:0032451">
    <property type="term" value="F:demethylase activity"/>
    <property type="evidence" value="ECO:0000266"/>
    <property type="project" value="RGD"/>
</dbReference>
<dbReference type="GO" id="GO:0019899">
    <property type="term" value="F:enzyme binding"/>
    <property type="evidence" value="ECO:0000266"/>
    <property type="project" value="RGD"/>
</dbReference>
<dbReference type="GO" id="GO:0101020">
    <property type="term" value="F:estrogen 16-alpha-hydroxylase activity"/>
    <property type="evidence" value="ECO:0000250"/>
    <property type="project" value="UniProtKB"/>
</dbReference>
<dbReference type="GO" id="GO:0101021">
    <property type="term" value="F:estrogen 2-hydroxylase activity"/>
    <property type="evidence" value="ECO:0000250"/>
    <property type="project" value="UniProtKB"/>
</dbReference>
<dbReference type="GO" id="GO:0020037">
    <property type="term" value="F:heme binding"/>
    <property type="evidence" value="ECO:0000250"/>
    <property type="project" value="UniProtKB"/>
</dbReference>
<dbReference type="GO" id="GO:0106256">
    <property type="term" value="F:hydroperoxy icosatetraenoate dehydratase activity"/>
    <property type="evidence" value="ECO:0007669"/>
    <property type="project" value="UniProtKB-EC"/>
</dbReference>
<dbReference type="GO" id="GO:0005506">
    <property type="term" value="F:iron ion binding"/>
    <property type="evidence" value="ECO:0007669"/>
    <property type="project" value="InterPro"/>
</dbReference>
<dbReference type="GO" id="GO:0004497">
    <property type="term" value="F:monooxygenase activity"/>
    <property type="evidence" value="ECO:0000314"/>
    <property type="project" value="RGD"/>
</dbReference>
<dbReference type="GO" id="GO:0050421">
    <property type="term" value="F:nitrite reductase (NO-forming) activity"/>
    <property type="evidence" value="ECO:0000314"/>
    <property type="project" value="RGD"/>
</dbReference>
<dbReference type="GO" id="GO:0016491">
    <property type="term" value="F:oxidoreductase activity"/>
    <property type="evidence" value="ECO:0000266"/>
    <property type="project" value="RGD"/>
</dbReference>
<dbReference type="GO" id="GO:0016712">
    <property type="term" value="F:oxidoreductase activity, acting on paired donors, with incorporation or reduction of molecular oxygen, reduced flavin or flavoprotein as one donor, and incorporation of one atom of oxygen"/>
    <property type="evidence" value="ECO:0000314"/>
    <property type="project" value="RGD"/>
</dbReference>
<dbReference type="GO" id="GO:0009820">
    <property type="term" value="P:alkaloid metabolic process"/>
    <property type="evidence" value="ECO:0000266"/>
    <property type="project" value="RGD"/>
</dbReference>
<dbReference type="GO" id="GO:0019369">
    <property type="term" value="P:arachidonate metabolic process"/>
    <property type="evidence" value="ECO:0007669"/>
    <property type="project" value="UniProtKB-UniPathway"/>
</dbReference>
<dbReference type="GO" id="GO:0045333">
    <property type="term" value="P:cellular respiration"/>
    <property type="evidence" value="ECO:0000266"/>
    <property type="project" value="RGD"/>
</dbReference>
<dbReference type="GO" id="GO:0071276">
    <property type="term" value="P:cellular response to cadmium ion"/>
    <property type="evidence" value="ECO:0000266"/>
    <property type="project" value="RGD"/>
</dbReference>
<dbReference type="GO" id="GO:0071280">
    <property type="term" value="P:cellular response to copper ion"/>
    <property type="evidence" value="ECO:0000270"/>
    <property type="project" value="RGD"/>
</dbReference>
<dbReference type="GO" id="GO:0008203">
    <property type="term" value="P:cholesterol metabolic process"/>
    <property type="evidence" value="ECO:0007669"/>
    <property type="project" value="UniProtKB-UniPathway"/>
</dbReference>
<dbReference type="GO" id="GO:0018894">
    <property type="term" value="P:dibenzo-p-dioxin metabolic process"/>
    <property type="evidence" value="ECO:0000266"/>
    <property type="project" value="RGD"/>
</dbReference>
<dbReference type="GO" id="GO:0008210">
    <property type="term" value="P:estrogen metabolic process"/>
    <property type="evidence" value="ECO:0000250"/>
    <property type="project" value="UniProtKB"/>
</dbReference>
<dbReference type="GO" id="GO:0050665">
    <property type="term" value="P:hydrogen peroxide biosynthetic process"/>
    <property type="evidence" value="ECO:0000266"/>
    <property type="project" value="RGD"/>
</dbReference>
<dbReference type="GO" id="GO:0030324">
    <property type="term" value="P:lung development"/>
    <property type="evidence" value="ECO:0000266"/>
    <property type="project" value="RGD"/>
</dbReference>
<dbReference type="GO" id="GO:0032787">
    <property type="term" value="P:monocarboxylic acid metabolic process"/>
    <property type="evidence" value="ECO:0000266"/>
    <property type="project" value="RGD"/>
</dbReference>
<dbReference type="GO" id="GO:0016098">
    <property type="term" value="P:monoterpenoid metabolic process"/>
    <property type="evidence" value="ECO:0000266"/>
    <property type="project" value="RGD"/>
</dbReference>
<dbReference type="GO" id="GO:0018937">
    <property type="term" value="P:nitroglycerin metabolic process"/>
    <property type="evidence" value="ECO:0000270"/>
    <property type="project" value="RGD"/>
</dbReference>
<dbReference type="GO" id="GO:0070989">
    <property type="term" value="P:oxidative demethylation"/>
    <property type="evidence" value="ECO:0000266"/>
    <property type="project" value="RGD"/>
</dbReference>
<dbReference type="GO" id="GO:0006778">
    <property type="term" value="P:porphyrin-containing compound metabolic process"/>
    <property type="evidence" value="ECO:0000266"/>
    <property type="project" value="RGD"/>
</dbReference>
<dbReference type="GO" id="GO:0009791">
    <property type="term" value="P:post-embryonic development"/>
    <property type="evidence" value="ECO:0000266"/>
    <property type="project" value="RGD"/>
</dbReference>
<dbReference type="GO" id="GO:0010468">
    <property type="term" value="P:regulation of gene expression"/>
    <property type="evidence" value="ECO:0000266"/>
    <property type="project" value="RGD"/>
</dbReference>
<dbReference type="GO" id="GO:0032355">
    <property type="term" value="P:response to estradiol"/>
    <property type="evidence" value="ECO:0000270"/>
    <property type="project" value="RGD"/>
</dbReference>
<dbReference type="GO" id="GO:0035902">
    <property type="term" value="P:response to immobilization stress"/>
    <property type="evidence" value="ECO:0000270"/>
    <property type="project" value="RGD"/>
</dbReference>
<dbReference type="GO" id="GO:0032496">
    <property type="term" value="P:response to lipopolysaccharide"/>
    <property type="evidence" value="ECO:0000270"/>
    <property type="project" value="RGD"/>
</dbReference>
<dbReference type="GO" id="GO:1904842">
    <property type="term" value="P:response to nitroglycerin"/>
    <property type="evidence" value="ECO:0000270"/>
    <property type="project" value="RGD"/>
</dbReference>
<dbReference type="GO" id="GO:1904772">
    <property type="term" value="P:response to tetrachloromethane"/>
    <property type="evidence" value="ECO:0000270"/>
    <property type="project" value="RGD"/>
</dbReference>
<dbReference type="GO" id="GO:0033197">
    <property type="term" value="P:response to vitamin E"/>
    <property type="evidence" value="ECO:0000270"/>
    <property type="project" value="RGD"/>
</dbReference>
<dbReference type="GO" id="GO:0009410">
    <property type="term" value="P:response to xenobiotic stimulus"/>
    <property type="evidence" value="ECO:0000270"/>
    <property type="project" value="RGD"/>
</dbReference>
<dbReference type="GO" id="GO:0042572">
    <property type="term" value="P:retinol metabolic process"/>
    <property type="evidence" value="ECO:0000250"/>
    <property type="project" value="UniProtKB"/>
</dbReference>
<dbReference type="GO" id="GO:0006706">
    <property type="term" value="P:steroid catabolic process"/>
    <property type="evidence" value="ECO:0000266"/>
    <property type="project" value="RGD"/>
</dbReference>
<dbReference type="GO" id="GO:0009403">
    <property type="term" value="P:toxin biosynthetic process"/>
    <property type="evidence" value="ECO:0000266"/>
    <property type="project" value="RGD"/>
</dbReference>
<dbReference type="GO" id="GO:0009404">
    <property type="term" value="P:toxin metabolic process"/>
    <property type="evidence" value="ECO:0000266"/>
    <property type="project" value="RGD"/>
</dbReference>
<dbReference type="GO" id="GO:0042360">
    <property type="term" value="P:vitamin E metabolic process"/>
    <property type="evidence" value="ECO:0000270"/>
    <property type="project" value="RGD"/>
</dbReference>
<dbReference type="GO" id="GO:0042178">
    <property type="term" value="P:xenobiotic catabolic process"/>
    <property type="evidence" value="ECO:0000266"/>
    <property type="project" value="RGD"/>
</dbReference>
<dbReference type="GO" id="GO:0006805">
    <property type="term" value="P:xenobiotic metabolic process"/>
    <property type="evidence" value="ECO:0000314"/>
    <property type="project" value="RGD"/>
</dbReference>
<dbReference type="CDD" id="cd20676">
    <property type="entry name" value="CYP1A"/>
    <property type="match status" value="1"/>
</dbReference>
<dbReference type="FunFam" id="1.10.630.10:FF:000002">
    <property type="entry name" value="Cytochrome P450 1A1"/>
    <property type="match status" value="1"/>
</dbReference>
<dbReference type="Gene3D" id="1.10.630.10">
    <property type="entry name" value="Cytochrome P450"/>
    <property type="match status" value="1"/>
</dbReference>
<dbReference type="InterPro" id="IPR001128">
    <property type="entry name" value="Cyt_P450"/>
</dbReference>
<dbReference type="InterPro" id="IPR017972">
    <property type="entry name" value="Cyt_P450_CS"/>
</dbReference>
<dbReference type="InterPro" id="IPR002401">
    <property type="entry name" value="Cyt_P450_E_grp-I"/>
</dbReference>
<dbReference type="InterPro" id="IPR008066">
    <property type="entry name" value="Cyt_P450_E_grp-I_CYP1"/>
</dbReference>
<dbReference type="InterPro" id="IPR036396">
    <property type="entry name" value="Cyt_P450_sf"/>
</dbReference>
<dbReference type="PANTHER" id="PTHR24289:SF21">
    <property type="entry name" value="CYTOCHROME P450 1A"/>
    <property type="match status" value="1"/>
</dbReference>
<dbReference type="PANTHER" id="PTHR24289">
    <property type="entry name" value="STEROID 17-ALPHA-HYDROXYLASE/17,20 LYASE"/>
    <property type="match status" value="1"/>
</dbReference>
<dbReference type="Pfam" id="PF00067">
    <property type="entry name" value="p450"/>
    <property type="match status" value="1"/>
</dbReference>
<dbReference type="PRINTS" id="PR00463">
    <property type="entry name" value="EP450I"/>
</dbReference>
<dbReference type="PRINTS" id="PR01683">
    <property type="entry name" value="EP450ICYP1A"/>
</dbReference>
<dbReference type="PRINTS" id="PR00385">
    <property type="entry name" value="P450"/>
</dbReference>
<dbReference type="SUPFAM" id="SSF48264">
    <property type="entry name" value="Cytochrome P450"/>
    <property type="match status" value="1"/>
</dbReference>
<dbReference type="PROSITE" id="PS00086">
    <property type="entry name" value="CYTOCHROME_P450"/>
    <property type="match status" value="1"/>
</dbReference>
<organism>
    <name type="scientific">Rattus norvegicus</name>
    <name type="common">Rat</name>
    <dbReference type="NCBI Taxonomy" id="10116"/>
    <lineage>
        <taxon>Eukaryota</taxon>
        <taxon>Metazoa</taxon>
        <taxon>Chordata</taxon>
        <taxon>Craniata</taxon>
        <taxon>Vertebrata</taxon>
        <taxon>Euteleostomi</taxon>
        <taxon>Mammalia</taxon>
        <taxon>Eutheria</taxon>
        <taxon>Euarchontoglires</taxon>
        <taxon>Glires</taxon>
        <taxon>Rodentia</taxon>
        <taxon>Myomorpha</taxon>
        <taxon>Muroidea</taxon>
        <taxon>Muridae</taxon>
        <taxon>Murinae</taxon>
        <taxon>Rattus</taxon>
    </lineage>
</organism>
<sequence>MAFSQYISLAPELLLATAIFCLVFWVLRGTRTQVPKGLKSPPGPWGLPFIGHMLTLGKNPHLSLTKLSQQYGDVLQIRIGSTPVVVLSGLNTIKQALVKQGDDFKGRPDLYSFTLITNGKSMTFNPDSGPVWAARRRLAQDALKSFSIASDPTSVSSCYLEEHVSKEANHLISKFQKLMAEVGHFEPVNQVVESVANVIGAMCFGKNFPRKSEEMLNLVKSSKDFVENVTSGNAVDFFPVLRYLPNPALKRFKNFNDNFVLFLQKTVQEHYQDFNKNSIQDITGALFKHSENYKDNGGLIPQEKIVNIVNDIFGAGFETVTTAIFWSILLLVTEPKVQRKIHEELDTVIGRDRQPRLSDRPQLPYLEAFILEIYRYTSFVPFTIPHSTTRDTSLNGFHIPKECCIFINQWQVNHDEKQWKDPFVFRPERFLTNDNTAIDKTLSEKVMLFGLGKRRCIGEIPAKWEVFLFLAILLHQLEFTVPPGVKVDLTPSYGLTMKPRTCEHVQAWPRFSK</sequence>
<accession>P04799</accession>
<accession>A1L120</accession>
<accession>Q64588</accession>
<gene>
    <name type="primary">Cyp1a2</name>
    <name type="synonym">Cyp1a-2</name>
</gene>
<feature type="initiator methionine" description="Removed" evidence="3">
    <location>
        <position position="1"/>
    </location>
</feature>
<feature type="chain" id="PRO_0000051656" description="Cytochrome P450 1A2">
    <location>
        <begin position="2"/>
        <end position="513"/>
    </location>
</feature>
<feature type="binding site" description="axial binding residue">
    <location>
        <position position="456"/>
    </location>
    <ligand>
        <name>heme</name>
        <dbReference type="ChEBI" id="CHEBI:30413"/>
    </ligand>
    <ligandPart>
        <name>Fe</name>
        <dbReference type="ChEBI" id="CHEBI:18248"/>
    </ligandPart>
</feature>
<feature type="glycosylation site" description="O-linked (GlcNAc) serine" evidence="4">
    <location>
        <position position="68"/>
    </location>
</feature>
<feature type="sequence conflict" description="In Ref. 6; AA sequence." evidence="5" ref="6">
    <original>V</original>
    <variation>M</variation>
    <location>
        <position position="26"/>
    </location>
</feature>
<feature type="sequence conflict" description="In Ref. 2; AAA41053 and 3; no nucleotide entry." evidence="5" ref="2 3">
    <original>R</original>
    <variation>H</variation>
    <location>
        <position position="137"/>
    </location>
</feature>
<feature type="sequence conflict" description="In Ref. 3; no nucleotide entry." evidence="5" ref="3">
    <original>F</original>
    <variation>L</variation>
    <location>
        <position position="185"/>
    </location>
</feature>
<feature type="sequence conflict" description="In Ref. 1; AAA41028." evidence="5" ref="1">
    <original>F</original>
    <variation>S</variation>
    <location>
        <position position="262"/>
    </location>
</feature>
<feature type="sequence conflict" description="In Ref. 2; AAA41053." evidence="5" ref="2">
    <original>C</original>
    <variation>R</variation>
    <location>
        <position position="403"/>
    </location>
</feature>
<name>CP1A2_RAT</name>